<keyword id="KW-1185">Reference proteome</keyword>
<keyword id="KW-0687">Ribonucleoprotein</keyword>
<keyword id="KW-0689">Ribosomal protein</keyword>
<keyword id="KW-0694">RNA-binding</keyword>
<keyword id="KW-0699">rRNA-binding</keyword>
<name>RS17_MARSD</name>
<feature type="chain" id="PRO_1000214779" description="Small ribosomal subunit protein uS17">
    <location>
        <begin position="1"/>
        <end position="88"/>
    </location>
</feature>
<sequence>MAELNLKGNRRVLTGVVVSDKADKTIVVRCETLVKHSLYKKYIRRHTKFMAHDPSNECGIGDKVQIVEFRPLSRRKRWHLDKILEKAV</sequence>
<reference key="1">
    <citation type="submission" date="2009-06" db="EMBL/GenBank/DDBJ databases">
        <title>Complete sequence of Desulfovibrio salexigens DSM 2638.</title>
        <authorList>
            <consortium name="US DOE Joint Genome Institute"/>
            <person name="Lucas S."/>
            <person name="Copeland A."/>
            <person name="Lapidus A."/>
            <person name="Glavina del Rio T."/>
            <person name="Tice H."/>
            <person name="Bruce D."/>
            <person name="Goodwin L."/>
            <person name="Pitluck S."/>
            <person name="Munk A.C."/>
            <person name="Brettin T."/>
            <person name="Detter J.C."/>
            <person name="Han C."/>
            <person name="Tapia R."/>
            <person name="Larimer F."/>
            <person name="Land M."/>
            <person name="Hauser L."/>
            <person name="Kyrpides N."/>
            <person name="Anderson I."/>
            <person name="Wall J.D."/>
            <person name="Arkin A.P."/>
            <person name="Dehal P."/>
            <person name="Chivian D."/>
            <person name="Giles B."/>
            <person name="Hazen T.C."/>
        </authorList>
    </citation>
    <scope>NUCLEOTIDE SEQUENCE [LARGE SCALE GENOMIC DNA]</scope>
    <source>
        <strain>ATCC 14822 / DSM 2638 / NCIMB 8403 / VKM B-1763</strain>
    </source>
</reference>
<gene>
    <name evidence="1" type="primary">rpsQ</name>
    <name type="ordered locus">Desal_1194</name>
</gene>
<dbReference type="EMBL" id="CP001649">
    <property type="protein sequence ID" value="ACS79257.1"/>
    <property type="molecule type" value="Genomic_DNA"/>
</dbReference>
<dbReference type="RefSeq" id="WP_015851076.1">
    <property type="nucleotide sequence ID" value="NC_012881.1"/>
</dbReference>
<dbReference type="SMR" id="C6C194"/>
<dbReference type="STRING" id="526222.Desal_1194"/>
<dbReference type="KEGG" id="dsa:Desal_1194"/>
<dbReference type="eggNOG" id="COG0186">
    <property type="taxonomic scope" value="Bacteria"/>
</dbReference>
<dbReference type="HOGENOM" id="CLU_073626_1_0_7"/>
<dbReference type="OrthoDB" id="9811714at2"/>
<dbReference type="Proteomes" id="UP000002601">
    <property type="component" value="Chromosome"/>
</dbReference>
<dbReference type="GO" id="GO:0022627">
    <property type="term" value="C:cytosolic small ribosomal subunit"/>
    <property type="evidence" value="ECO:0007669"/>
    <property type="project" value="TreeGrafter"/>
</dbReference>
<dbReference type="GO" id="GO:0019843">
    <property type="term" value="F:rRNA binding"/>
    <property type="evidence" value="ECO:0007669"/>
    <property type="project" value="UniProtKB-UniRule"/>
</dbReference>
<dbReference type="GO" id="GO:0003735">
    <property type="term" value="F:structural constituent of ribosome"/>
    <property type="evidence" value="ECO:0007669"/>
    <property type="project" value="InterPro"/>
</dbReference>
<dbReference type="GO" id="GO:0006412">
    <property type="term" value="P:translation"/>
    <property type="evidence" value="ECO:0007669"/>
    <property type="project" value="UniProtKB-UniRule"/>
</dbReference>
<dbReference type="CDD" id="cd00364">
    <property type="entry name" value="Ribosomal_uS17"/>
    <property type="match status" value="1"/>
</dbReference>
<dbReference type="Gene3D" id="2.40.50.140">
    <property type="entry name" value="Nucleic acid-binding proteins"/>
    <property type="match status" value="1"/>
</dbReference>
<dbReference type="HAMAP" id="MF_01345_B">
    <property type="entry name" value="Ribosomal_uS17_B"/>
    <property type="match status" value="1"/>
</dbReference>
<dbReference type="InterPro" id="IPR012340">
    <property type="entry name" value="NA-bd_OB-fold"/>
</dbReference>
<dbReference type="InterPro" id="IPR000266">
    <property type="entry name" value="Ribosomal_uS17"/>
</dbReference>
<dbReference type="InterPro" id="IPR019984">
    <property type="entry name" value="Ribosomal_uS17_bact/chlr"/>
</dbReference>
<dbReference type="InterPro" id="IPR019979">
    <property type="entry name" value="Ribosomal_uS17_CS"/>
</dbReference>
<dbReference type="NCBIfam" id="NF004123">
    <property type="entry name" value="PRK05610.1"/>
    <property type="match status" value="1"/>
</dbReference>
<dbReference type="NCBIfam" id="TIGR03635">
    <property type="entry name" value="uS17_bact"/>
    <property type="match status" value="1"/>
</dbReference>
<dbReference type="PANTHER" id="PTHR10744">
    <property type="entry name" value="40S RIBOSOMAL PROTEIN S11 FAMILY MEMBER"/>
    <property type="match status" value="1"/>
</dbReference>
<dbReference type="PANTHER" id="PTHR10744:SF1">
    <property type="entry name" value="SMALL RIBOSOMAL SUBUNIT PROTEIN US17M"/>
    <property type="match status" value="1"/>
</dbReference>
<dbReference type="Pfam" id="PF00366">
    <property type="entry name" value="Ribosomal_S17"/>
    <property type="match status" value="1"/>
</dbReference>
<dbReference type="PRINTS" id="PR00973">
    <property type="entry name" value="RIBOSOMALS17"/>
</dbReference>
<dbReference type="SUPFAM" id="SSF50249">
    <property type="entry name" value="Nucleic acid-binding proteins"/>
    <property type="match status" value="1"/>
</dbReference>
<dbReference type="PROSITE" id="PS00056">
    <property type="entry name" value="RIBOSOMAL_S17"/>
    <property type="match status" value="1"/>
</dbReference>
<proteinExistence type="inferred from homology"/>
<organism>
    <name type="scientific">Maridesulfovibrio salexigens (strain ATCC 14822 / DSM 2638 / NCIMB 8403 / VKM B-1763)</name>
    <name type="common">Desulfovibrio salexigens</name>
    <dbReference type="NCBI Taxonomy" id="526222"/>
    <lineage>
        <taxon>Bacteria</taxon>
        <taxon>Pseudomonadati</taxon>
        <taxon>Thermodesulfobacteriota</taxon>
        <taxon>Desulfovibrionia</taxon>
        <taxon>Desulfovibrionales</taxon>
        <taxon>Desulfovibrionaceae</taxon>
        <taxon>Maridesulfovibrio</taxon>
    </lineage>
</organism>
<evidence type="ECO:0000255" key="1">
    <source>
        <dbReference type="HAMAP-Rule" id="MF_01345"/>
    </source>
</evidence>
<evidence type="ECO:0000305" key="2"/>
<accession>C6C194</accession>
<protein>
    <recommendedName>
        <fullName evidence="1">Small ribosomal subunit protein uS17</fullName>
    </recommendedName>
    <alternativeName>
        <fullName evidence="2">30S ribosomal protein S17</fullName>
    </alternativeName>
</protein>
<comment type="function">
    <text evidence="1">One of the primary rRNA binding proteins, it binds specifically to the 5'-end of 16S ribosomal RNA.</text>
</comment>
<comment type="subunit">
    <text evidence="1">Part of the 30S ribosomal subunit.</text>
</comment>
<comment type="similarity">
    <text evidence="1">Belongs to the universal ribosomal protein uS17 family.</text>
</comment>